<sequence length="122" mass="14071">MDYEFKKNILDGHYYCHCSMDHEIVGRWVQEEIGKESTKIAQVLALIVAARSNPTEELCLNGTEISLMICGDEVTVQDNALLHSYELEAESEFELYDCESVACCGLEDFEQLIQQWQLFVRR</sequence>
<accession>Q7MHW8</accession>
<organism>
    <name type="scientific">Vibrio vulnificus (strain YJ016)</name>
    <dbReference type="NCBI Taxonomy" id="196600"/>
    <lineage>
        <taxon>Bacteria</taxon>
        <taxon>Pseudomonadati</taxon>
        <taxon>Pseudomonadota</taxon>
        <taxon>Gammaproteobacteria</taxon>
        <taxon>Vibrionales</taxon>
        <taxon>Vibrionaceae</taxon>
        <taxon>Vibrio</taxon>
    </lineage>
</organism>
<gene>
    <name type="ordered locus">VV2750</name>
</gene>
<protein>
    <recommendedName>
        <fullName evidence="1">UPF0231 protein VV2750</fullName>
    </recommendedName>
</protein>
<reference key="1">
    <citation type="journal article" date="2003" name="Genome Res.">
        <title>Comparative genome analysis of Vibrio vulnificus, a marine pathogen.</title>
        <authorList>
            <person name="Chen C.-Y."/>
            <person name="Wu K.-M."/>
            <person name="Chang Y.-C."/>
            <person name="Chang C.-H."/>
            <person name="Tsai H.-C."/>
            <person name="Liao T.-L."/>
            <person name="Liu Y.-M."/>
            <person name="Chen H.-J."/>
            <person name="Shen A.B.-T."/>
            <person name="Li J.-C."/>
            <person name="Su T.-L."/>
            <person name="Shao C.-P."/>
            <person name="Lee C.-T."/>
            <person name="Hor L.-I."/>
            <person name="Tsai S.-F."/>
        </authorList>
    </citation>
    <scope>NUCLEOTIDE SEQUENCE [LARGE SCALE GENOMIC DNA]</scope>
    <source>
        <strain>YJ016</strain>
    </source>
</reference>
<feature type="chain" id="PRO_0000214662" description="UPF0231 protein VV2750">
    <location>
        <begin position="1"/>
        <end position="122"/>
    </location>
</feature>
<proteinExistence type="inferred from homology"/>
<dbReference type="EMBL" id="BA000037">
    <property type="protein sequence ID" value="BAC95513.1"/>
    <property type="molecule type" value="Genomic_DNA"/>
</dbReference>
<dbReference type="RefSeq" id="WP_011079578.1">
    <property type="nucleotide sequence ID" value="NC_005139.1"/>
</dbReference>
<dbReference type="STRING" id="672.VV93_v1c24620"/>
<dbReference type="KEGG" id="vvy:VV2750"/>
<dbReference type="PATRIC" id="fig|196600.6.peg.2743"/>
<dbReference type="eggNOG" id="COG3112">
    <property type="taxonomic scope" value="Bacteria"/>
</dbReference>
<dbReference type="HOGENOM" id="CLU_139226_1_0_6"/>
<dbReference type="Proteomes" id="UP000002675">
    <property type="component" value="Chromosome I"/>
</dbReference>
<dbReference type="HAMAP" id="MF_01053">
    <property type="entry name" value="UPF0231"/>
    <property type="match status" value="1"/>
</dbReference>
<dbReference type="InterPro" id="IPR008249">
    <property type="entry name" value="UPF0231"/>
</dbReference>
<dbReference type="NCBIfam" id="NF003579">
    <property type="entry name" value="PRK05248.2-4"/>
    <property type="match status" value="1"/>
</dbReference>
<dbReference type="Pfam" id="PF06062">
    <property type="entry name" value="UPF0231"/>
    <property type="match status" value="1"/>
</dbReference>
<dbReference type="PIRSF" id="PIRSF006287">
    <property type="entry name" value="UCP006287"/>
    <property type="match status" value="1"/>
</dbReference>
<comment type="similarity">
    <text evidence="1">Belongs to the UPF0231 family.</text>
</comment>
<name>Y2750_VIBVY</name>
<evidence type="ECO:0000255" key="1">
    <source>
        <dbReference type="HAMAP-Rule" id="MF_01053"/>
    </source>
</evidence>